<accession>Q9SJR0</accession>
<accession>A0MES3</accession>
<organism>
    <name type="scientific">Arabidopsis thaliana</name>
    <name type="common">Mouse-ear cress</name>
    <dbReference type="NCBI Taxonomy" id="3702"/>
    <lineage>
        <taxon>Eukaryota</taxon>
        <taxon>Viridiplantae</taxon>
        <taxon>Streptophyta</taxon>
        <taxon>Embryophyta</taxon>
        <taxon>Tracheophyta</taxon>
        <taxon>Spermatophyta</taxon>
        <taxon>Magnoliopsida</taxon>
        <taxon>eudicotyledons</taxon>
        <taxon>Gunneridae</taxon>
        <taxon>Pentapetalae</taxon>
        <taxon>rosids</taxon>
        <taxon>malvids</taxon>
        <taxon>Brassicales</taxon>
        <taxon>Brassicaceae</taxon>
        <taxon>Camelineae</taxon>
        <taxon>Arabidopsis</taxon>
    </lineage>
</organism>
<name>ERF24_ARATH</name>
<reference key="1">
    <citation type="submission" date="2004-02" db="EMBL/GenBank/DDBJ databases">
        <title>Molecular cloning, expression, phylogenetic and functional characterization of the Arabidopsis AP2/EREBP transcription factor family.</title>
        <authorList>
            <person name="Pan Y."/>
            <person name="Gong W."/>
            <person name="Liu D."/>
            <person name="Fu Q."/>
            <person name="Mei W.-Q."/>
            <person name="Song W.-Q."/>
            <person name="Ma L.-G."/>
            <person name="Luo J.-C."/>
            <person name="Deng X.-W."/>
            <person name="Zhu Y.-X."/>
        </authorList>
    </citation>
    <scope>NUCLEOTIDE SEQUENCE [MRNA]</scope>
</reference>
<reference key="2">
    <citation type="journal article" date="1999" name="Nature">
        <title>Sequence and analysis of chromosome 2 of the plant Arabidopsis thaliana.</title>
        <authorList>
            <person name="Lin X."/>
            <person name="Kaul S."/>
            <person name="Rounsley S.D."/>
            <person name="Shea T.P."/>
            <person name="Benito M.-I."/>
            <person name="Town C.D."/>
            <person name="Fujii C.Y."/>
            <person name="Mason T.M."/>
            <person name="Bowman C.L."/>
            <person name="Barnstead M.E."/>
            <person name="Feldblyum T.V."/>
            <person name="Buell C.R."/>
            <person name="Ketchum K.A."/>
            <person name="Lee J.J."/>
            <person name="Ronning C.M."/>
            <person name="Koo H.L."/>
            <person name="Moffat K.S."/>
            <person name="Cronin L.A."/>
            <person name="Shen M."/>
            <person name="Pai G."/>
            <person name="Van Aken S."/>
            <person name="Umayam L."/>
            <person name="Tallon L.J."/>
            <person name="Gill J.E."/>
            <person name="Adams M.D."/>
            <person name="Carrera A.J."/>
            <person name="Creasy T.H."/>
            <person name="Goodman H.M."/>
            <person name="Somerville C.R."/>
            <person name="Copenhaver G.P."/>
            <person name="Preuss D."/>
            <person name="Nierman W.C."/>
            <person name="White O."/>
            <person name="Eisen J.A."/>
            <person name="Salzberg S.L."/>
            <person name="Fraser C.M."/>
            <person name="Venter J.C."/>
        </authorList>
    </citation>
    <scope>NUCLEOTIDE SEQUENCE [LARGE SCALE GENOMIC DNA]</scope>
    <source>
        <strain>cv. Columbia</strain>
    </source>
</reference>
<reference key="3">
    <citation type="journal article" date="2017" name="Plant J.">
        <title>Araport11: a complete reannotation of the Arabidopsis thaliana reference genome.</title>
        <authorList>
            <person name="Cheng C.Y."/>
            <person name="Krishnakumar V."/>
            <person name="Chan A.P."/>
            <person name="Thibaud-Nissen F."/>
            <person name="Schobel S."/>
            <person name="Town C.D."/>
        </authorList>
    </citation>
    <scope>GENOME REANNOTATION</scope>
    <source>
        <strain>cv. Columbia</strain>
    </source>
</reference>
<reference key="4">
    <citation type="journal article" date="2006" name="Plant Biotechnol. J.">
        <title>Simultaneous high-throughput recombinational cloning of open reading frames in closed and open configurations.</title>
        <authorList>
            <person name="Underwood B.A."/>
            <person name="Vanderhaeghen R."/>
            <person name="Whitford R."/>
            <person name="Town C.D."/>
            <person name="Hilson P."/>
        </authorList>
    </citation>
    <scope>NUCLEOTIDE SEQUENCE [LARGE SCALE MRNA]</scope>
    <source>
        <strain>cv. Columbia</strain>
    </source>
</reference>
<reference key="5">
    <citation type="journal article" date="2006" name="Plant Physiol.">
        <title>Genome-wide analysis of the ERF gene family in Arabidopsis and rice.</title>
        <authorList>
            <person name="Nakano T."/>
            <person name="Suzuki K."/>
            <person name="Fujimura T."/>
            <person name="Shinshi H."/>
        </authorList>
    </citation>
    <scope>GENE FAMILY</scope>
    <scope>NOMENCLATURE</scope>
</reference>
<feature type="chain" id="PRO_0000290384" description="Ethylene-responsive transcription factor ERF024">
    <location>
        <begin position="1"/>
        <end position="184"/>
    </location>
</feature>
<feature type="DNA-binding region" description="AP2/ERF" evidence="2">
    <location>
        <begin position="14"/>
        <end position="72"/>
    </location>
</feature>
<feature type="region of interest" description="Disordered" evidence="3">
    <location>
        <begin position="1"/>
        <end position="21"/>
    </location>
</feature>
<proteinExistence type="evidence at transcript level"/>
<protein>
    <recommendedName>
        <fullName>Ethylene-responsive transcription factor ERF024</fullName>
    </recommendedName>
</protein>
<sequence length="184" mass="19790">MQGTSKDNGGRHPLYRGVRQRKNSNKWVSEIREPRKPNRIWLGTFSTPEMAAIAYDVAALALKGSQAELNFPNSVSSLPAPTSMSPADIQAAAASAAAAFGAARDAIVMANNNSQTSGVACMNSSYDNTNMNGFMDEDLVFDMPNVLMNMAEGMLLSPPRPTVFDAAYDADGFPGGDDYLWNFP</sequence>
<dbReference type="EMBL" id="AY560867">
    <property type="protein sequence ID" value="AAT44934.1"/>
    <property type="molecule type" value="mRNA"/>
</dbReference>
<dbReference type="EMBL" id="AC006919">
    <property type="protein sequence ID" value="AAD24629.1"/>
    <property type="molecule type" value="Genomic_DNA"/>
</dbReference>
<dbReference type="EMBL" id="CP002685">
    <property type="protein sequence ID" value="AEC09255.1"/>
    <property type="molecule type" value="Genomic_DNA"/>
</dbReference>
<dbReference type="EMBL" id="DQ446604">
    <property type="protein sequence ID" value="ABE65890.1"/>
    <property type="molecule type" value="mRNA"/>
</dbReference>
<dbReference type="EMBL" id="DQ653045">
    <property type="protein sequence ID" value="ABK28526.1"/>
    <property type="status" value="ALT_SEQ"/>
    <property type="molecule type" value="mRNA"/>
</dbReference>
<dbReference type="PIR" id="H84780">
    <property type="entry name" value="H84780"/>
</dbReference>
<dbReference type="RefSeq" id="NP_181186.1">
    <property type="nucleotide sequence ID" value="NM_129202.1"/>
</dbReference>
<dbReference type="SMR" id="Q9SJR0"/>
<dbReference type="BioGRID" id="3563">
    <property type="interactions" value="1"/>
</dbReference>
<dbReference type="FunCoup" id="Q9SJR0">
    <property type="interactions" value="23"/>
</dbReference>
<dbReference type="STRING" id="3702.Q9SJR0"/>
<dbReference type="PaxDb" id="3702-AT2G36450.1"/>
<dbReference type="EnsemblPlants" id="AT2G36450.1">
    <property type="protein sequence ID" value="AT2G36450.1"/>
    <property type="gene ID" value="AT2G36450"/>
</dbReference>
<dbReference type="GeneID" id="818219"/>
<dbReference type="Gramene" id="AT2G36450.1">
    <property type="protein sequence ID" value="AT2G36450.1"/>
    <property type="gene ID" value="AT2G36450"/>
</dbReference>
<dbReference type="KEGG" id="ath:AT2G36450"/>
<dbReference type="Araport" id="AT2G36450"/>
<dbReference type="TAIR" id="AT2G36450">
    <property type="gene designation" value="HRD"/>
</dbReference>
<dbReference type="eggNOG" id="ENOG502RZWY">
    <property type="taxonomic scope" value="Eukaryota"/>
</dbReference>
<dbReference type="HOGENOM" id="CLU_063331_1_1_1"/>
<dbReference type="InParanoid" id="Q9SJR0"/>
<dbReference type="OMA" id="EHETSLW"/>
<dbReference type="OrthoDB" id="1932364at2759"/>
<dbReference type="PhylomeDB" id="Q9SJR0"/>
<dbReference type="PRO" id="PR:Q9SJR0"/>
<dbReference type="Proteomes" id="UP000006548">
    <property type="component" value="Chromosome 2"/>
</dbReference>
<dbReference type="ExpressionAtlas" id="Q9SJR0">
    <property type="expression patterns" value="baseline and differential"/>
</dbReference>
<dbReference type="GO" id="GO:0005634">
    <property type="term" value="C:nucleus"/>
    <property type="evidence" value="ECO:0007669"/>
    <property type="project" value="UniProtKB-SubCell"/>
</dbReference>
<dbReference type="GO" id="GO:0003677">
    <property type="term" value="F:DNA binding"/>
    <property type="evidence" value="ECO:0007669"/>
    <property type="project" value="UniProtKB-KW"/>
</dbReference>
<dbReference type="GO" id="GO:0003700">
    <property type="term" value="F:DNA-binding transcription factor activity"/>
    <property type="evidence" value="ECO:0000250"/>
    <property type="project" value="TAIR"/>
</dbReference>
<dbReference type="GO" id="GO:0050832">
    <property type="term" value="P:defense response to fungus"/>
    <property type="evidence" value="ECO:0000270"/>
    <property type="project" value="TAIR"/>
</dbReference>
<dbReference type="GO" id="GO:0009873">
    <property type="term" value="P:ethylene-activated signaling pathway"/>
    <property type="evidence" value="ECO:0007669"/>
    <property type="project" value="UniProtKB-KW"/>
</dbReference>
<dbReference type="CDD" id="cd00018">
    <property type="entry name" value="AP2"/>
    <property type="match status" value="1"/>
</dbReference>
<dbReference type="FunFam" id="3.30.730.10:FF:000001">
    <property type="entry name" value="Ethylene-responsive transcription factor 2"/>
    <property type="match status" value="1"/>
</dbReference>
<dbReference type="Gene3D" id="3.30.730.10">
    <property type="entry name" value="AP2/ERF domain"/>
    <property type="match status" value="1"/>
</dbReference>
<dbReference type="InterPro" id="IPR001471">
    <property type="entry name" value="AP2/ERF_dom"/>
</dbReference>
<dbReference type="InterPro" id="IPR036955">
    <property type="entry name" value="AP2/ERF_dom_sf"/>
</dbReference>
<dbReference type="InterPro" id="IPR016177">
    <property type="entry name" value="DNA-bd_dom_sf"/>
</dbReference>
<dbReference type="InterPro" id="IPR045277">
    <property type="entry name" value="DRE1A-I"/>
</dbReference>
<dbReference type="PANTHER" id="PTHR31839:SF85">
    <property type="entry name" value="AP2_ERF DOMAIN-CONTAINING PROTEIN"/>
    <property type="match status" value="1"/>
</dbReference>
<dbReference type="PANTHER" id="PTHR31839">
    <property type="entry name" value="DEHYDRATION-RESPONSIVE ELEMENT-BINDING PROTEIN 1D"/>
    <property type="match status" value="1"/>
</dbReference>
<dbReference type="Pfam" id="PF00847">
    <property type="entry name" value="AP2"/>
    <property type="match status" value="1"/>
</dbReference>
<dbReference type="PRINTS" id="PR00367">
    <property type="entry name" value="ETHRSPELEMNT"/>
</dbReference>
<dbReference type="SMART" id="SM00380">
    <property type="entry name" value="AP2"/>
    <property type="match status" value="1"/>
</dbReference>
<dbReference type="SUPFAM" id="SSF54171">
    <property type="entry name" value="DNA-binding domain"/>
    <property type="match status" value="1"/>
</dbReference>
<dbReference type="PROSITE" id="PS51032">
    <property type="entry name" value="AP2_ERF"/>
    <property type="match status" value="1"/>
</dbReference>
<keyword id="KW-0010">Activator</keyword>
<keyword id="KW-0238">DNA-binding</keyword>
<keyword id="KW-0936">Ethylene signaling pathway</keyword>
<keyword id="KW-0539">Nucleus</keyword>
<keyword id="KW-1185">Reference proteome</keyword>
<keyword id="KW-0804">Transcription</keyword>
<keyword id="KW-0805">Transcription regulation</keyword>
<gene>
    <name type="primary">ERF024</name>
    <name type="ordered locus">At2g36450</name>
    <name type="ORF">F1O11.8</name>
</gene>
<comment type="function">
    <text evidence="1">Probably acts as a transcriptional activator. Binds to the GCC-box pathogenesis-related promoter element. May be involved in the regulation of gene expression by stress factors and by components of stress signal transduction pathways (By similarity).</text>
</comment>
<comment type="subcellular location">
    <subcellularLocation>
        <location evidence="4">Nucleus</location>
    </subcellularLocation>
</comment>
<comment type="similarity">
    <text evidence="4">Belongs to the AP2/ERF transcription factor family. ERF subfamily.</text>
</comment>
<comment type="sequence caution" evidence="4">
    <conflict type="erroneous termination">
        <sequence resource="EMBL-CDS" id="ABK28526"/>
    </conflict>
    <text>Extended C-terminus.</text>
</comment>
<evidence type="ECO:0000250" key="1"/>
<evidence type="ECO:0000255" key="2">
    <source>
        <dbReference type="PROSITE-ProRule" id="PRU00366"/>
    </source>
</evidence>
<evidence type="ECO:0000256" key="3">
    <source>
        <dbReference type="SAM" id="MobiDB-lite"/>
    </source>
</evidence>
<evidence type="ECO:0000305" key="4"/>